<sequence length="362" mass="40290">MAATPIRVIVSALVILSVLLLSSSLGVATETEIERNETEVRLMYEQWLVENRKNYNGLGEKERRFKIFKDNLKFVDEHNSVPDRTFEVGLTRFADLTNEEFRAIYLRKKMERTKDSVKTERYLYKEGDVLPDEVDWRANGAVVSVKDQGNCGSCWAFSAVGAVEGINQITTGELISLSEQELVDCDRGFVNAGCDGGIMNYAFEFIMKNGGIETDQDYPYNANDLGLCNADKNNNTRVVTIDGYEDVPRDDEKSLKKAVAHQPVSVAIEASSQAFQLYKSGVMTGTCGISLDHGVVVVGYGSTSGEDYWIIRNSWGLNWGDSGYVKLQRNIDDPFGKCGIAMMPSYPTKSSFPSSFDLLSEI</sequence>
<accession>Q9LT77</accession>
<accession>Q8GT77</accession>
<evidence type="ECO:0000250" key="1">
    <source>
        <dbReference type="UniProtKB" id="P00785"/>
    </source>
</evidence>
<evidence type="ECO:0000250" key="2">
    <source>
        <dbReference type="UniProtKB" id="P43297"/>
    </source>
</evidence>
<evidence type="ECO:0000250" key="3">
    <source>
        <dbReference type="UniProtKB" id="P80884"/>
    </source>
</evidence>
<evidence type="ECO:0000250" key="4">
    <source>
        <dbReference type="UniProtKB" id="P84346"/>
    </source>
</evidence>
<evidence type="ECO:0000255" key="5"/>
<evidence type="ECO:0000255" key="6">
    <source>
        <dbReference type="PROSITE-ProRule" id="PRU00498"/>
    </source>
</evidence>
<evidence type="ECO:0000255" key="7">
    <source>
        <dbReference type="PROSITE-ProRule" id="PRU10088"/>
    </source>
</evidence>
<evidence type="ECO:0000255" key="8">
    <source>
        <dbReference type="PROSITE-ProRule" id="PRU10089"/>
    </source>
</evidence>
<evidence type="ECO:0000255" key="9">
    <source>
        <dbReference type="PROSITE-ProRule" id="PRU10090"/>
    </source>
</evidence>
<evidence type="ECO:0000305" key="10"/>
<evidence type="ECO:0000312" key="11">
    <source>
        <dbReference type="Araport" id="AT3G19400"/>
    </source>
</evidence>
<evidence type="ECO:0000312" key="12">
    <source>
        <dbReference type="EMBL" id="BAB02464.1"/>
    </source>
</evidence>
<keyword id="KW-0025">Alternative splicing</keyword>
<keyword id="KW-1015">Disulfide bond</keyword>
<keyword id="KW-0325">Glycoprotein</keyword>
<keyword id="KW-0378">Hydrolase</keyword>
<keyword id="KW-0645">Protease</keyword>
<keyword id="KW-1185">Reference proteome</keyword>
<keyword id="KW-0732">Signal</keyword>
<keyword id="KW-0788">Thiol protease</keyword>
<keyword id="KW-0865">Zymogen</keyword>
<organism>
    <name type="scientific">Arabidopsis thaliana</name>
    <name type="common">Mouse-ear cress</name>
    <dbReference type="NCBI Taxonomy" id="3702"/>
    <lineage>
        <taxon>Eukaryota</taxon>
        <taxon>Viridiplantae</taxon>
        <taxon>Streptophyta</taxon>
        <taxon>Embryophyta</taxon>
        <taxon>Tracheophyta</taxon>
        <taxon>Spermatophyta</taxon>
        <taxon>Magnoliopsida</taxon>
        <taxon>eudicotyledons</taxon>
        <taxon>Gunneridae</taxon>
        <taxon>Pentapetalae</taxon>
        <taxon>rosids</taxon>
        <taxon>malvids</taxon>
        <taxon>Brassicales</taxon>
        <taxon>Brassicaceae</taxon>
        <taxon>Camelineae</taxon>
        <taxon>Arabidopsis</taxon>
    </lineage>
</organism>
<protein>
    <recommendedName>
        <fullName evidence="10">Probable cysteine protease RDL2</fullName>
        <ecNumber evidence="3">3.4.22.-</ecNumber>
    </recommendedName>
    <alternativeName>
        <fullName evidence="10">Probable cysteine proteinase At3g19400</fullName>
    </alternativeName>
    <alternativeName>
        <fullName evidence="10">RD21A-like protease 2</fullName>
    </alternativeName>
</protein>
<comment type="function">
    <text evidence="2">Probable thiol protease.</text>
</comment>
<comment type="alternative products">
    <event type="alternative splicing"/>
    <isoform>
        <id>Q9LT77-1</id>
        <name>1</name>
        <sequence type="displayed"/>
    </isoform>
    <text>A number of isoforms are produced. According to EST sequences.</text>
</comment>
<comment type="similarity">
    <text evidence="7 8 9">Belongs to the peptidase C1 family.</text>
</comment>
<proteinExistence type="evidence at transcript level"/>
<name>RDL2_ARATH</name>
<feature type="signal peptide" evidence="5">
    <location>
        <begin position="1"/>
        <end position="28"/>
    </location>
</feature>
<feature type="propeptide" id="PRO_0000026459" description="Activation peptide" evidence="1">
    <location>
        <begin position="29"/>
        <end position="129"/>
    </location>
</feature>
<feature type="chain" id="PRO_0000026460" description="Probable cysteine protease RDL2">
    <location>
        <begin position="130"/>
        <end position="362"/>
    </location>
</feature>
<feature type="active site" evidence="7">
    <location>
        <position position="154"/>
    </location>
</feature>
<feature type="active site" evidence="8">
    <location>
        <position position="293"/>
    </location>
</feature>
<feature type="active site" evidence="9">
    <location>
        <position position="313"/>
    </location>
</feature>
<feature type="glycosylation site" description="N-linked (GlcNAc...) asparagine" evidence="6">
    <location>
        <position position="36"/>
    </location>
</feature>
<feature type="glycosylation site" description="N-linked (GlcNAc...) asparagine" evidence="6">
    <location>
        <position position="234"/>
    </location>
</feature>
<feature type="disulfide bond" evidence="4">
    <location>
        <begin position="151"/>
        <end position="194"/>
    </location>
</feature>
<feature type="disulfide bond" evidence="4">
    <location>
        <begin position="185"/>
        <end position="228"/>
    </location>
</feature>
<feature type="disulfide bond" evidence="4">
    <location>
        <begin position="287"/>
        <end position="338"/>
    </location>
</feature>
<feature type="sequence conflict" description="In Ref. 3; BAC43113." evidence="10" ref="3">
    <original>T</original>
    <variation>N</variation>
    <location>
        <position position="113"/>
    </location>
</feature>
<gene>
    <name evidence="10" type="primary">RDL2</name>
    <name evidence="11" type="ordered locus">At3g19400</name>
    <name evidence="12" type="ORF">MLD14.13</name>
</gene>
<reference key="1">
    <citation type="journal article" date="2000" name="DNA Res.">
        <title>Structural analysis of Arabidopsis thaliana chromosome 3. I. Sequence features of the regions of 4,504,864 bp covered by sixty P1 and TAC clones.</title>
        <authorList>
            <person name="Sato S."/>
            <person name="Nakamura Y."/>
            <person name="Kaneko T."/>
            <person name="Katoh T."/>
            <person name="Asamizu E."/>
            <person name="Tabata S."/>
        </authorList>
    </citation>
    <scope>NUCLEOTIDE SEQUENCE [LARGE SCALE GENOMIC DNA]</scope>
    <source>
        <strain>cv. Columbia</strain>
    </source>
</reference>
<reference key="2">
    <citation type="journal article" date="2017" name="Plant J.">
        <title>Araport11: a complete reannotation of the Arabidopsis thaliana reference genome.</title>
        <authorList>
            <person name="Cheng C.Y."/>
            <person name="Krishnakumar V."/>
            <person name="Chan A.P."/>
            <person name="Thibaud-Nissen F."/>
            <person name="Schobel S."/>
            <person name="Town C.D."/>
        </authorList>
    </citation>
    <scope>GENOME REANNOTATION</scope>
    <source>
        <strain>cv. Columbia</strain>
    </source>
</reference>
<reference key="3">
    <citation type="journal article" date="2002" name="Science">
        <title>Functional annotation of a full-length Arabidopsis cDNA collection.</title>
        <authorList>
            <person name="Seki M."/>
            <person name="Narusaka M."/>
            <person name="Kamiya A."/>
            <person name="Ishida J."/>
            <person name="Satou M."/>
            <person name="Sakurai T."/>
            <person name="Nakajima M."/>
            <person name="Enju A."/>
            <person name="Akiyama K."/>
            <person name="Oono Y."/>
            <person name="Muramatsu M."/>
            <person name="Hayashizaki Y."/>
            <person name="Kawai J."/>
            <person name="Carninci P."/>
            <person name="Itoh M."/>
            <person name="Ishii Y."/>
            <person name="Arakawa T."/>
            <person name="Shibata K."/>
            <person name="Shinagawa A."/>
            <person name="Shinozaki K."/>
        </authorList>
    </citation>
    <scope>NUCLEOTIDE SEQUENCE [LARGE SCALE MRNA]</scope>
    <source>
        <strain>cv. Columbia</strain>
    </source>
</reference>
<dbReference type="EC" id="3.4.22.-" evidence="3"/>
<dbReference type="EMBL" id="AB025624">
    <property type="protein sequence ID" value="BAB02464.1"/>
    <property type="molecule type" value="Genomic_DNA"/>
</dbReference>
<dbReference type="EMBL" id="CP002686">
    <property type="protein sequence ID" value="AEE76236.1"/>
    <property type="molecule type" value="Genomic_DNA"/>
</dbReference>
<dbReference type="EMBL" id="AK118509">
    <property type="protein sequence ID" value="BAC43113.1"/>
    <property type="molecule type" value="mRNA"/>
</dbReference>
<dbReference type="RefSeq" id="NP_566634.2">
    <molecule id="Q9LT77-1"/>
    <property type="nucleotide sequence ID" value="NM_112827.3"/>
</dbReference>
<dbReference type="SMR" id="Q9LT77"/>
<dbReference type="FunCoup" id="Q9LT77">
    <property type="interactions" value="599"/>
</dbReference>
<dbReference type="STRING" id="3702.Q9LT77"/>
<dbReference type="MEROPS" id="C01.029"/>
<dbReference type="MEROPS" id="I29.003"/>
<dbReference type="GlyCosmos" id="Q9LT77">
    <property type="glycosylation" value="2 sites, No reported glycans"/>
</dbReference>
<dbReference type="GlyGen" id="Q9LT77">
    <property type="glycosylation" value="2 sites"/>
</dbReference>
<dbReference type="PaxDb" id="3702-AT3G19400.1"/>
<dbReference type="ProteomicsDB" id="234750">
    <molecule id="Q9LT77-1"/>
</dbReference>
<dbReference type="EnsemblPlants" id="AT3G19400.1">
    <molecule id="Q9LT77-1"/>
    <property type="protein sequence ID" value="AT3G19400.1"/>
    <property type="gene ID" value="AT3G19400"/>
</dbReference>
<dbReference type="GeneID" id="821474"/>
<dbReference type="Gramene" id="AT3G19400.1">
    <molecule id="Q9LT77-1"/>
    <property type="protein sequence ID" value="AT3G19400.1"/>
    <property type="gene ID" value="AT3G19400"/>
</dbReference>
<dbReference type="KEGG" id="ath:AT3G19400"/>
<dbReference type="Araport" id="AT3G19400"/>
<dbReference type="TAIR" id="AT3G19400"/>
<dbReference type="eggNOG" id="KOG1543">
    <property type="taxonomic scope" value="Eukaryota"/>
</dbReference>
<dbReference type="HOGENOM" id="CLU_012184_1_0_1"/>
<dbReference type="InParanoid" id="Q9LT77"/>
<dbReference type="OMA" id="PRGDEMS"/>
<dbReference type="OrthoDB" id="10253408at2759"/>
<dbReference type="PhylomeDB" id="Q9LT77"/>
<dbReference type="PRO" id="PR:Q9LT77"/>
<dbReference type="Proteomes" id="UP000006548">
    <property type="component" value="Chromosome 3"/>
</dbReference>
<dbReference type="ExpressionAtlas" id="Q9LT77">
    <property type="expression patterns" value="baseline and differential"/>
</dbReference>
<dbReference type="GO" id="GO:0008234">
    <property type="term" value="F:cysteine-type peptidase activity"/>
    <property type="evidence" value="ECO:0007669"/>
    <property type="project" value="UniProtKB-KW"/>
</dbReference>
<dbReference type="GO" id="GO:0006508">
    <property type="term" value="P:proteolysis"/>
    <property type="evidence" value="ECO:0007669"/>
    <property type="project" value="UniProtKB-KW"/>
</dbReference>
<dbReference type="CDD" id="cd02248">
    <property type="entry name" value="Peptidase_C1A"/>
    <property type="match status" value="1"/>
</dbReference>
<dbReference type="FunFam" id="3.90.70.10:FF:000068">
    <property type="entry name" value="Cysteine protease 1"/>
    <property type="match status" value="1"/>
</dbReference>
<dbReference type="Gene3D" id="3.90.70.10">
    <property type="entry name" value="Cysteine proteinases"/>
    <property type="match status" value="1"/>
</dbReference>
<dbReference type="InterPro" id="IPR038765">
    <property type="entry name" value="Papain-like_cys_pep_sf"/>
</dbReference>
<dbReference type="InterPro" id="IPR025661">
    <property type="entry name" value="Pept_asp_AS"/>
</dbReference>
<dbReference type="InterPro" id="IPR000169">
    <property type="entry name" value="Pept_cys_AS"/>
</dbReference>
<dbReference type="InterPro" id="IPR025660">
    <property type="entry name" value="Pept_his_AS"/>
</dbReference>
<dbReference type="InterPro" id="IPR013128">
    <property type="entry name" value="Peptidase_C1A"/>
</dbReference>
<dbReference type="InterPro" id="IPR000668">
    <property type="entry name" value="Peptidase_C1A_C"/>
</dbReference>
<dbReference type="InterPro" id="IPR039417">
    <property type="entry name" value="Peptidase_C1A_papain-like"/>
</dbReference>
<dbReference type="InterPro" id="IPR013201">
    <property type="entry name" value="Prot_inhib_I29"/>
</dbReference>
<dbReference type="PANTHER" id="PTHR12411">
    <property type="entry name" value="CYSTEINE PROTEASE FAMILY C1-RELATED"/>
    <property type="match status" value="1"/>
</dbReference>
<dbReference type="Pfam" id="PF08246">
    <property type="entry name" value="Inhibitor_I29"/>
    <property type="match status" value="1"/>
</dbReference>
<dbReference type="Pfam" id="PF00112">
    <property type="entry name" value="Peptidase_C1"/>
    <property type="match status" value="1"/>
</dbReference>
<dbReference type="PRINTS" id="PR00705">
    <property type="entry name" value="PAPAIN"/>
</dbReference>
<dbReference type="SMART" id="SM00848">
    <property type="entry name" value="Inhibitor_I29"/>
    <property type="match status" value="1"/>
</dbReference>
<dbReference type="SMART" id="SM00645">
    <property type="entry name" value="Pept_C1"/>
    <property type="match status" value="1"/>
</dbReference>
<dbReference type="SUPFAM" id="SSF54001">
    <property type="entry name" value="Cysteine proteinases"/>
    <property type="match status" value="1"/>
</dbReference>
<dbReference type="PROSITE" id="PS00640">
    <property type="entry name" value="THIOL_PROTEASE_ASN"/>
    <property type="match status" value="1"/>
</dbReference>
<dbReference type="PROSITE" id="PS00139">
    <property type="entry name" value="THIOL_PROTEASE_CYS"/>
    <property type="match status" value="1"/>
</dbReference>
<dbReference type="PROSITE" id="PS00639">
    <property type="entry name" value="THIOL_PROTEASE_HIS"/>
    <property type="match status" value="1"/>
</dbReference>